<evidence type="ECO:0000250" key="1">
    <source>
        <dbReference type="UniProtKB" id="Q02083"/>
    </source>
</evidence>
<evidence type="ECO:0000250" key="2">
    <source>
        <dbReference type="UniProtKB" id="Q5KTC7"/>
    </source>
</evidence>
<evidence type="ECO:0000255" key="3"/>
<evidence type="ECO:0000269" key="4">
    <source>
    </source>
</evidence>
<evidence type="ECO:0000303" key="5">
    <source>
    </source>
</evidence>
<evidence type="ECO:0000305" key="6"/>
<evidence type="ECO:0000305" key="7">
    <source>
    </source>
</evidence>
<evidence type="ECO:0000312" key="8">
    <source>
        <dbReference type="Proteomes" id="UP000001811"/>
    </source>
</evidence>
<evidence type="ECO:0007744" key="9">
    <source>
        <dbReference type="PDB" id="6DXZ"/>
    </source>
</evidence>
<evidence type="ECO:0007744" key="10">
    <source>
        <dbReference type="PDB" id="6DY0"/>
    </source>
</evidence>
<evidence type="ECO:0007744" key="11">
    <source>
        <dbReference type="PDB" id="6DY1"/>
    </source>
</evidence>
<evidence type="ECO:0007829" key="12">
    <source>
        <dbReference type="PDB" id="6DXZ"/>
    </source>
</evidence>
<evidence type="ECO:0007829" key="13">
    <source>
        <dbReference type="PDB" id="6DY1"/>
    </source>
</evidence>
<reference evidence="8" key="1">
    <citation type="journal article" date="2011" name="Nature">
        <title>A high-resolution map of human evolutionary constraint using 29 mammals.</title>
        <authorList>
            <person name="Lindblad-Toh K."/>
            <person name="Garber M."/>
            <person name="Zuk O."/>
            <person name="Lin M.F."/>
            <person name="Parker B.J."/>
            <person name="Washietl S."/>
            <person name="Kheradpour P."/>
            <person name="Ernst J."/>
            <person name="Jordan G."/>
            <person name="Mauceli E."/>
            <person name="Ward L.D."/>
            <person name="Lowe C.B."/>
            <person name="Holloway A.K."/>
            <person name="Clamp M."/>
            <person name="Gnerre S."/>
            <person name="Alfoldi J."/>
            <person name="Beal K."/>
            <person name="Chang J."/>
            <person name="Clawson H."/>
            <person name="Cuff J."/>
            <person name="Di Palma F."/>
            <person name="Fitzgerald S."/>
            <person name="Flicek P."/>
            <person name="Guttman M."/>
            <person name="Hubisz M.J."/>
            <person name="Jaffe D.B."/>
            <person name="Jungreis I."/>
            <person name="Kent W.J."/>
            <person name="Kostka D."/>
            <person name="Lara M."/>
            <person name="Martins A.L."/>
            <person name="Massingham T."/>
            <person name="Moltke I."/>
            <person name="Raney B.J."/>
            <person name="Rasmussen M.D."/>
            <person name="Robinson J."/>
            <person name="Stark A."/>
            <person name="Vilella A.J."/>
            <person name="Wen J."/>
            <person name="Xie X."/>
            <person name="Zody M.C."/>
            <person name="Baldwin J."/>
            <person name="Bloom T."/>
            <person name="Chin C.W."/>
            <person name="Heiman D."/>
            <person name="Nicol R."/>
            <person name="Nusbaum C."/>
            <person name="Young S."/>
            <person name="Wilkinson J."/>
            <person name="Worley K.C."/>
            <person name="Kovar C.L."/>
            <person name="Muzny D.M."/>
            <person name="Gibbs R.A."/>
            <person name="Cree A."/>
            <person name="Dihn H.H."/>
            <person name="Fowler G."/>
            <person name="Jhangiani S."/>
            <person name="Joshi V."/>
            <person name="Lee S."/>
            <person name="Lewis L.R."/>
            <person name="Nazareth L.V."/>
            <person name="Okwuonu G."/>
            <person name="Santibanez J."/>
            <person name="Warren W.C."/>
            <person name="Mardis E.R."/>
            <person name="Weinstock G.M."/>
            <person name="Wilson R.K."/>
            <person name="Delehaunty K."/>
            <person name="Dooling D."/>
            <person name="Fronik C."/>
            <person name="Fulton L."/>
            <person name="Fulton B."/>
            <person name="Graves T."/>
            <person name="Minx P."/>
            <person name="Sodergren E."/>
            <person name="Birney E."/>
            <person name="Margulies E.H."/>
            <person name="Herrero J."/>
            <person name="Green E.D."/>
            <person name="Haussler D."/>
            <person name="Siepel A."/>
            <person name="Goldman N."/>
            <person name="Pollard K.S."/>
            <person name="Pedersen J.S."/>
            <person name="Lander E.S."/>
            <person name="Kellis M."/>
        </authorList>
    </citation>
    <scope>NUCLEOTIDE SEQUENCE [LARGE SCALE GENOMIC DNA]</scope>
    <source>
        <strain evidence="8">Thorbecke</strain>
    </source>
</reference>
<reference evidence="9 10 11" key="2">
    <citation type="journal article" date="2018" name="Proc. Natl. Acad. Sci. U.S.A.">
        <title>Molecular mechanism of activation of the immunoregulatory amidase NAAA.</title>
        <authorList>
            <person name="Gorelik A."/>
            <person name="Gebai A."/>
            <person name="Illes K."/>
            <person name="Piomelli D."/>
            <person name="Nagar B."/>
        </authorList>
    </citation>
    <scope>X-RAY CRYSTALLOGRAPHY (2.70 ANGSTROMS) OF 31-126 AND 127-358 IN COMPLEXES WITH SYNTHETIC INHIBITOR AND MYRISTATE</scope>
    <scope>ACTIVE SITE</scope>
    <scope>SUBUNIT</scope>
    <scope>PROTEOLYTIC CLEAVAGE</scope>
    <scope>GLYCOSYLATION AT ASN-39; ASN-108 AND ASN-334</scope>
</reference>
<comment type="function">
    <text evidence="2">Degrades bioactive fatty acid amides to their corresponding acids, with the following preference: N-palmitoylethanolamine &gt; N-myristoylethanolamine &gt; N-stearoylethanolamine &gt; N-oleoylethanolamine &gt; N-linoleoylethanolamine &gt; N-arachidonoylethanolamine.</text>
</comment>
<comment type="catalytic activity">
    <reaction evidence="1">
        <text>N-hexadecanoylethanolamine + H2O = ethanolamine + hexadecanoate</text>
        <dbReference type="Rhea" id="RHEA:45064"/>
        <dbReference type="ChEBI" id="CHEBI:7896"/>
        <dbReference type="ChEBI" id="CHEBI:15377"/>
        <dbReference type="ChEBI" id="CHEBI:57603"/>
        <dbReference type="ChEBI" id="CHEBI:71464"/>
    </reaction>
    <physiologicalReaction direction="left-to-right" evidence="1">
        <dbReference type="Rhea" id="RHEA:45065"/>
    </physiologicalReaction>
</comment>
<comment type="catalytic activity">
    <reaction evidence="1">
        <text>an N-(long-chain fatty acyl)ethanolamine + H2O = a long-chain fatty acid + ethanolamine</text>
        <dbReference type="Rhea" id="RHEA:17505"/>
        <dbReference type="ChEBI" id="CHEBI:15377"/>
        <dbReference type="ChEBI" id="CHEBI:15897"/>
        <dbReference type="ChEBI" id="CHEBI:57560"/>
        <dbReference type="ChEBI" id="CHEBI:57603"/>
        <dbReference type="EC" id="3.5.1.60"/>
    </reaction>
    <physiologicalReaction direction="left-to-right" evidence="1">
        <dbReference type="Rhea" id="RHEA:17506"/>
    </physiologicalReaction>
</comment>
<comment type="catalytic activity">
    <reaction evidence="1">
        <text>N-dodecanoylethanolamine + H2O = dodecanoate + ethanolamine</text>
        <dbReference type="Rhea" id="RHEA:45456"/>
        <dbReference type="ChEBI" id="CHEBI:15377"/>
        <dbReference type="ChEBI" id="CHEBI:18262"/>
        <dbReference type="ChEBI" id="CHEBI:57603"/>
        <dbReference type="ChEBI" id="CHEBI:85263"/>
    </reaction>
    <physiologicalReaction direction="left-to-right" evidence="1">
        <dbReference type="Rhea" id="RHEA:45457"/>
    </physiologicalReaction>
</comment>
<comment type="catalytic activity">
    <reaction evidence="1">
        <text>N-tetradecanoylethanolamine + H2O = tetradecanoate + ethanolamine</text>
        <dbReference type="Rhea" id="RHEA:45452"/>
        <dbReference type="ChEBI" id="CHEBI:15377"/>
        <dbReference type="ChEBI" id="CHEBI:30807"/>
        <dbReference type="ChEBI" id="CHEBI:57603"/>
        <dbReference type="ChEBI" id="CHEBI:85262"/>
    </reaction>
    <physiologicalReaction direction="left-to-right" evidence="1">
        <dbReference type="Rhea" id="RHEA:45453"/>
    </physiologicalReaction>
</comment>
<comment type="catalytic activity">
    <reaction evidence="1">
        <text>an N-acylsphing-4-enine + H2O = sphing-4-enine + a fatty acid</text>
        <dbReference type="Rhea" id="RHEA:20856"/>
        <dbReference type="ChEBI" id="CHEBI:15377"/>
        <dbReference type="ChEBI" id="CHEBI:28868"/>
        <dbReference type="ChEBI" id="CHEBI:52639"/>
        <dbReference type="ChEBI" id="CHEBI:57756"/>
        <dbReference type="EC" id="3.5.1.23"/>
    </reaction>
    <physiologicalReaction direction="left-to-right" evidence="1">
        <dbReference type="Rhea" id="RHEA:20857"/>
    </physiologicalReaction>
</comment>
<comment type="catalytic activity">
    <reaction evidence="1">
        <text>N-hexadecanoylsphing-4-enine + H2O = sphing-4-enine + hexadecanoate</text>
        <dbReference type="Rhea" id="RHEA:38891"/>
        <dbReference type="ChEBI" id="CHEBI:7896"/>
        <dbReference type="ChEBI" id="CHEBI:15377"/>
        <dbReference type="ChEBI" id="CHEBI:57756"/>
        <dbReference type="ChEBI" id="CHEBI:72959"/>
    </reaction>
    <physiologicalReaction direction="left-to-right" evidence="1">
        <dbReference type="Rhea" id="RHEA:38892"/>
    </physiologicalReaction>
</comment>
<comment type="catalytic activity">
    <reaction evidence="1">
        <text>N-dodecanoylsphing-4-enine + H2O = dodecanoate + sphing-4-enine</text>
        <dbReference type="Rhea" id="RHEA:41291"/>
        <dbReference type="ChEBI" id="CHEBI:15377"/>
        <dbReference type="ChEBI" id="CHEBI:18262"/>
        <dbReference type="ChEBI" id="CHEBI:57756"/>
        <dbReference type="ChEBI" id="CHEBI:72956"/>
    </reaction>
    <physiologicalReaction direction="left-to-right" evidence="1">
        <dbReference type="Rhea" id="RHEA:41292"/>
    </physiologicalReaction>
</comment>
<comment type="pathway">
    <text evidence="1">Lipid metabolism; fatty acid metabolism.</text>
</comment>
<comment type="subunit">
    <text evidence="4">Heterodimer of an alpha and a beta subunit, produced by autocatalytic cleavage.</text>
</comment>
<comment type="subcellular location">
    <subcellularLocation>
        <location evidence="1">Lysosome</location>
    </subcellularLocation>
    <subcellularLocation>
        <location evidence="1">Membrane</location>
        <topology evidence="1">Peripheral membrane protein</topology>
    </subcellularLocation>
</comment>
<comment type="PTM">
    <text evidence="1 4">N-glycosylated (PubMed:30301806). Tunicamycin treatment causes a reduction in specific activity against N-palmitoylethanolamine (By similarity).</text>
</comment>
<comment type="PTM">
    <text evidence="1 4">Autoproteolytic cleavage at pH 4.5 gives rise to the alpha and beta subunit (PubMed:30301806). Cleavage gives rise to a conformation change that activates the enzyme. The same catalytic Cys residue mediates the autoproteolytic cleavage and subsequent hydrolysis of lipid substrates (By similarity).</text>
</comment>
<comment type="similarity">
    <text evidence="6">Belongs to the acid ceramidase family.</text>
</comment>
<protein>
    <recommendedName>
        <fullName evidence="2">N-acylethanolamine-hydrolyzing acid amidase</fullName>
        <ecNumber evidence="2">3.5.1.60</ecNumber>
    </recommendedName>
    <alternativeName>
        <fullName evidence="2">Acylsphingosine deacylase NAAA</fullName>
        <ecNumber evidence="2">3.5.1.23</ecNumber>
    </alternativeName>
    <component>
        <recommendedName>
            <fullName>N-acylethanolamine-hydrolyzing acid amidase subunit alpha</fullName>
        </recommendedName>
    </component>
    <component>
        <recommendedName>
            <fullName>N-acylethanolamine-hydrolyzing acid amidase subunit beta</fullName>
        </recommendedName>
    </component>
</protein>
<feature type="signal peptide" evidence="3">
    <location>
        <begin position="1"/>
        <end position="26"/>
    </location>
</feature>
<feature type="chain" id="PRO_0000446527" description="N-acylethanolamine-hydrolyzing acid amidase" evidence="3">
    <location>
        <begin position="27"/>
        <end position="358"/>
    </location>
</feature>
<feature type="chain" id="PRO_0000446528" description="N-acylethanolamine-hydrolyzing acid amidase subunit alpha" evidence="7">
    <location>
        <begin position="27"/>
        <end position="126"/>
    </location>
</feature>
<feature type="chain" id="PRO_0000446529" description="N-acylethanolamine-hydrolyzing acid amidase subunit beta" evidence="7">
    <location>
        <begin position="127"/>
        <end position="358"/>
    </location>
</feature>
<feature type="active site" description="Nucleophile" evidence="4">
    <location>
        <position position="127"/>
    </location>
</feature>
<feature type="site" description="Important for enzyme activity" evidence="1">
    <location>
        <position position="143"/>
    </location>
</feature>
<feature type="site" description="Important for enzyme activity" evidence="1">
    <location>
        <position position="288"/>
    </location>
</feature>
<feature type="glycosylation site" description="N-linked (GlcNAc...) asparagine" evidence="4 9">
    <location>
        <position position="39"/>
    </location>
</feature>
<feature type="glycosylation site" description="N-linked (GlcNAc...) asparagine" evidence="4 9">
    <location>
        <position position="108"/>
    </location>
</feature>
<feature type="glycosylation site" description="N-linked (GlcNAc...) asparagine" evidence="3">
    <location>
        <position position="310"/>
    </location>
</feature>
<feature type="glycosylation site" description="N-linked (GlcNAc...) asparagine" evidence="4 9">
    <location>
        <position position="334"/>
    </location>
</feature>
<feature type="glycosylation site" description="N-linked (GlcNAc...) asparagine" evidence="3">
    <location>
        <position position="356"/>
    </location>
</feature>
<feature type="strand" evidence="12">
    <location>
        <begin position="37"/>
        <end position="41"/>
    </location>
</feature>
<feature type="helix" evidence="12">
    <location>
        <begin position="50"/>
        <end position="53"/>
    </location>
</feature>
<feature type="helix" evidence="12">
    <location>
        <begin position="58"/>
        <end position="72"/>
    </location>
</feature>
<feature type="helix" evidence="12">
    <location>
        <begin position="75"/>
        <end position="83"/>
    </location>
</feature>
<feature type="helix" evidence="12">
    <location>
        <begin position="85"/>
        <end position="90"/>
    </location>
</feature>
<feature type="helix" evidence="12">
    <location>
        <begin position="94"/>
        <end position="107"/>
    </location>
</feature>
<feature type="helix" evidence="12">
    <location>
        <begin position="111"/>
        <end position="118"/>
    </location>
</feature>
<feature type="turn" evidence="12">
    <location>
        <begin position="119"/>
        <end position="122"/>
    </location>
</feature>
<feature type="strand" evidence="12">
    <location>
        <begin position="128"/>
        <end position="133"/>
    </location>
</feature>
<feature type="strand" evidence="12">
    <location>
        <begin position="139"/>
        <end position="146"/>
    </location>
</feature>
<feature type="helix" evidence="12">
    <location>
        <begin position="150"/>
        <end position="156"/>
    </location>
</feature>
<feature type="strand" evidence="12">
    <location>
        <begin position="157"/>
        <end position="164"/>
    </location>
</feature>
<feature type="strand" evidence="12">
    <location>
        <begin position="167"/>
        <end position="175"/>
    </location>
</feature>
<feature type="strand" evidence="12">
    <location>
        <begin position="182"/>
        <end position="186"/>
    </location>
</feature>
<feature type="turn" evidence="12">
    <location>
        <begin position="187"/>
        <end position="189"/>
    </location>
</feature>
<feature type="strand" evidence="12">
    <location>
        <begin position="190"/>
        <end position="196"/>
    </location>
</feature>
<feature type="helix" evidence="12">
    <location>
        <begin position="202"/>
        <end position="210"/>
    </location>
</feature>
<feature type="helix" evidence="12">
    <location>
        <begin position="217"/>
        <end position="227"/>
    </location>
</feature>
<feature type="helix" evidence="12">
    <location>
        <begin position="231"/>
        <end position="240"/>
    </location>
</feature>
<feature type="strand" evidence="12">
    <location>
        <begin position="243"/>
        <end position="245"/>
    </location>
</feature>
<feature type="strand" evidence="12">
    <location>
        <begin position="247"/>
        <end position="252"/>
    </location>
</feature>
<feature type="strand" evidence="12">
    <location>
        <begin position="259"/>
        <end position="264"/>
    </location>
</feature>
<feature type="strand" evidence="12">
    <location>
        <begin position="266"/>
        <end position="274"/>
    </location>
</feature>
<feature type="helix" evidence="12">
    <location>
        <begin position="277"/>
        <end position="279"/>
    </location>
</feature>
<feature type="strand" evidence="12">
    <location>
        <begin position="283"/>
        <end position="289"/>
    </location>
</feature>
<feature type="strand" evidence="12">
    <location>
        <begin position="297"/>
        <end position="299"/>
    </location>
</feature>
<feature type="helix" evidence="12">
    <location>
        <begin position="302"/>
        <end position="312"/>
    </location>
</feature>
<feature type="turn" evidence="13">
    <location>
        <begin position="313"/>
        <end position="315"/>
    </location>
</feature>
<feature type="helix" evidence="12">
    <location>
        <begin position="319"/>
        <end position="326"/>
    </location>
</feature>
<feature type="turn" evidence="12">
    <location>
        <begin position="329"/>
        <end position="331"/>
    </location>
</feature>
<feature type="strand" evidence="12">
    <location>
        <begin position="336"/>
        <end position="342"/>
    </location>
</feature>
<feature type="helix" evidence="12">
    <location>
        <begin position="347"/>
        <end position="349"/>
    </location>
</feature>
<feature type="strand" evidence="12">
    <location>
        <begin position="351"/>
        <end position="354"/>
    </location>
</feature>
<accession>G1T7U7</accession>
<proteinExistence type="evidence at protein level"/>
<gene>
    <name evidence="5" type="primary">NAAA</name>
</gene>
<sequence>MQGTGHPVRPVLELLLLLLLLAGVGGSTTASTPGPPLFNVSLDVAPERWLPVLRHYDVELVRAAVAQVIGDRVPKWVLALIEKGALKLERLLPPPFTAEIRGMCDFLNLSLADGLLVNLAYEYSAFCTSIVAQDSRGHVYHGRNLDYPYGSILRKLTVDVQFLKNGQIAFTGTTFIGYVGLWTGQSPHKFTVSGDERDRGWWWENLVAALFLRHSPISWLLRTTLSEAESFEAAVYRLAKTPLIADVYYIVGGTNPREGVVITRNRDGPADIWPLDPLKGVWFLVETNYDHWKPAPEEDDRRTPAIKALNATGQAKLSLETLFQVLSVVPVYNNYTIYTTVMSAASPDKYMTRIRNPS</sequence>
<name>NAAA_RABIT</name>
<keyword id="KW-0002">3D-structure</keyword>
<keyword id="KW-0068">Autocatalytic cleavage</keyword>
<keyword id="KW-0276">Fatty acid metabolism</keyword>
<keyword id="KW-0325">Glycoprotein</keyword>
<keyword id="KW-0378">Hydrolase</keyword>
<keyword id="KW-0442">Lipid degradation</keyword>
<keyword id="KW-0443">Lipid metabolism</keyword>
<keyword id="KW-0458">Lysosome</keyword>
<keyword id="KW-0472">Membrane</keyword>
<keyword id="KW-1185">Reference proteome</keyword>
<keyword id="KW-0732">Signal</keyword>
<keyword id="KW-0865">Zymogen</keyword>
<dbReference type="EC" id="3.5.1.60" evidence="2"/>
<dbReference type="EC" id="3.5.1.23" evidence="2"/>
<dbReference type="EMBL" id="AAGW02022955">
    <property type="status" value="NOT_ANNOTATED_CDS"/>
    <property type="molecule type" value="Genomic_DNA"/>
</dbReference>
<dbReference type="PDB" id="6DXZ">
    <property type="method" value="X-ray"/>
    <property type="resolution" value="2.70 A"/>
    <property type="chains" value="A=31-126, B=127-358"/>
</dbReference>
<dbReference type="PDB" id="6DY0">
    <property type="method" value="X-ray"/>
    <property type="resolution" value="3.01 A"/>
    <property type="chains" value="A=31-126, B=127-358"/>
</dbReference>
<dbReference type="PDB" id="6DY1">
    <property type="method" value="X-ray"/>
    <property type="resolution" value="3.00 A"/>
    <property type="chains" value="A=31-126, B=127-358"/>
</dbReference>
<dbReference type="PDBsum" id="6DXZ"/>
<dbReference type="PDBsum" id="6DY0"/>
<dbReference type="PDBsum" id="6DY1"/>
<dbReference type="SMR" id="G1T7U7"/>
<dbReference type="FunCoup" id="G1T7U7">
    <property type="interactions" value="103"/>
</dbReference>
<dbReference type="STRING" id="9986.ENSOCUP00000012603"/>
<dbReference type="GlyCosmos" id="G1T7U7">
    <property type="glycosylation" value="5 sites, No reported glycans"/>
</dbReference>
<dbReference type="iPTMnet" id="G1T7U7"/>
<dbReference type="PaxDb" id="9986-ENSOCUP00000012603"/>
<dbReference type="eggNOG" id="ENOG502QT7H">
    <property type="taxonomic scope" value="Eukaryota"/>
</dbReference>
<dbReference type="HOGENOM" id="CLU_054401_0_0_1"/>
<dbReference type="InParanoid" id="G1T7U7"/>
<dbReference type="TreeFam" id="TF313219"/>
<dbReference type="BRENDA" id="3.5.1.60">
    <property type="organism ID" value="1749"/>
</dbReference>
<dbReference type="UniPathway" id="UPA00199"/>
<dbReference type="Proteomes" id="UP000001811">
    <property type="component" value="Unplaced"/>
</dbReference>
<dbReference type="GO" id="GO:0005764">
    <property type="term" value="C:lysosome"/>
    <property type="evidence" value="ECO:0000250"/>
    <property type="project" value="UniProtKB"/>
</dbReference>
<dbReference type="GO" id="GO:0016020">
    <property type="term" value="C:membrane"/>
    <property type="evidence" value="ECO:0000250"/>
    <property type="project" value="UniProtKB"/>
</dbReference>
<dbReference type="GO" id="GO:0017064">
    <property type="term" value="F:fatty acid amide hydrolase activity"/>
    <property type="evidence" value="ECO:0000250"/>
    <property type="project" value="UniProtKB"/>
</dbReference>
<dbReference type="GO" id="GO:0047412">
    <property type="term" value="F:N-(long-chain-acyl)ethanolamine deacylase activity"/>
    <property type="evidence" value="ECO:0000250"/>
    <property type="project" value="UniProtKB"/>
</dbReference>
<dbReference type="GO" id="GO:0017040">
    <property type="term" value="F:N-acylsphingosine amidohydrolase activity"/>
    <property type="evidence" value="ECO:0000250"/>
    <property type="project" value="UniProtKB"/>
</dbReference>
<dbReference type="GO" id="GO:0006631">
    <property type="term" value="P:fatty acid metabolic process"/>
    <property type="evidence" value="ECO:0000250"/>
    <property type="project" value="UniProtKB"/>
</dbReference>
<dbReference type="GO" id="GO:0016042">
    <property type="term" value="P:lipid catabolic process"/>
    <property type="evidence" value="ECO:0007669"/>
    <property type="project" value="UniProtKB-KW"/>
</dbReference>
<dbReference type="GO" id="GO:0070291">
    <property type="term" value="P:N-acylethanolamine metabolic process"/>
    <property type="evidence" value="ECO:0000250"/>
    <property type="project" value="UniProtKB"/>
</dbReference>
<dbReference type="GO" id="GO:0070292">
    <property type="term" value="P:N-acylphosphatidylethanolamine metabolic process"/>
    <property type="evidence" value="ECO:0000250"/>
    <property type="project" value="UniProtKB"/>
</dbReference>
<dbReference type="GO" id="GO:0006670">
    <property type="term" value="P:sphingosine metabolic process"/>
    <property type="evidence" value="ECO:0000250"/>
    <property type="project" value="UniProtKB"/>
</dbReference>
<dbReference type="CDD" id="cd01903">
    <property type="entry name" value="Ntn_AC_NAAA"/>
    <property type="match status" value="1"/>
</dbReference>
<dbReference type="FunFam" id="3.60.60.10:FF:000003">
    <property type="entry name" value="N-acylethanolamine-hydrolyzing acid amidase"/>
    <property type="match status" value="1"/>
</dbReference>
<dbReference type="Gene3D" id="3.60.60.10">
    <property type="entry name" value="Penicillin V Acylase, Chain A"/>
    <property type="match status" value="1"/>
</dbReference>
<dbReference type="InterPro" id="IPR016699">
    <property type="entry name" value="Acid_ceramidase-like"/>
</dbReference>
<dbReference type="InterPro" id="IPR029130">
    <property type="entry name" value="Acid_ceramidase_N"/>
</dbReference>
<dbReference type="InterPro" id="IPR029132">
    <property type="entry name" value="CBAH/NAAA_C"/>
</dbReference>
<dbReference type="PANTHER" id="PTHR28583">
    <property type="entry name" value="ACID AMIDASE"/>
    <property type="match status" value="1"/>
</dbReference>
<dbReference type="PANTHER" id="PTHR28583:SF4">
    <property type="entry name" value="N-ACYLETHANOLAMINE-HYDROLYZING ACID AMIDASE"/>
    <property type="match status" value="1"/>
</dbReference>
<dbReference type="Pfam" id="PF02275">
    <property type="entry name" value="CBAH"/>
    <property type="match status" value="1"/>
</dbReference>
<dbReference type="Pfam" id="PF15508">
    <property type="entry name" value="NAAA-beta"/>
    <property type="match status" value="1"/>
</dbReference>
<dbReference type="PIRSF" id="PIRSF017632">
    <property type="entry name" value="Acid_ceramidase-like"/>
    <property type="match status" value="1"/>
</dbReference>
<organism evidence="8">
    <name type="scientific">Oryctolagus cuniculus</name>
    <name type="common">Rabbit</name>
    <dbReference type="NCBI Taxonomy" id="9986"/>
    <lineage>
        <taxon>Eukaryota</taxon>
        <taxon>Metazoa</taxon>
        <taxon>Chordata</taxon>
        <taxon>Craniata</taxon>
        <taxon>Vertebrata</taxon>
        <taxon>Euteleostomi</taxon>
        <taxon>Mammalia</taxon>
        <taxon>Eutheria</taxon>
        <taxon>Euarchontoglires</taxon>
        <taxon>Glires</taxon>
        <taxon>Lagomorpha</taxon>
        <taxon>Leporidae</taxon>
        <taxon>Oryctolagus</taxon>
    </lineage>
</organism>